<feature type="chain" id="PRO_0000179938" description="2,3-bisphosphoglycerate-dependent phosphoglycerate mutase">
    <location>
        <begin position="1"/>
        <end position="249"/>
    </location>
</feature>
<feature type="active site" description="Tele-phosphohistidine intermediate" evidence="1">
    <location>
        <position position="10"/>
    </location>
</feature>
<feature type="active site" description="Proton donor/acceptor" evidence="1">
    <location>
        <position position="88"/>
    </location>
</feature>
<feature type="binding site" evidence="1">
    <location>
        <begin position="9"/>
        <end position="16"/>
    </location>
    <ligand>
        <name>substrate</name>
    </ligand>
</feature>
<feature type="binding site" evidence="1">
    <location>
        <begin position="22"/>
        <end position="23"/>
    </location>
    <ligand>
        <name>substrate</name>
    </ligand>
</feature>
<feature type="binding site" evidence="1">
    <location>
        <position position="61"/>
    </location>
    <ligand>
        <name>substrate</name>
    </ligand>
</feature>
<feature type="binding site" evidence="1">
    <location>
        <begin position="88"/>
        <end position="91"/>
    </location>
    <ligand>
        <name>substrate</name>
    </ligand>
</feature>
<feature type="binding site" evidence="1">
    <location>
        <position position="99"/>
    </location>
    <ligand>
        <name>substrate</name>
    </ligand>
</feature>
<feature type="binding site" evidence="1">
    <location>
        <begin position="115"/>
        <end position="116"/>
    </location>
    <ligand>
        <name>substrate</name>
    </ligand>
</feature>
<feature type="binding site" evidence="1">
    <location>
        <begin position="184"/>
        <end position="185"/>
    </location>
    <ligand>
        <name>substrate</name>
    </ligand>
</feature>
<feature type="site" description="Transition state stabilizer" evidence="1">
    <location>
        <position position="183"/>
    </location>
</feature>
<organism>
    <name type="scientific">Xanthomonas axonopodis pv. citri (strain 306)</name>
    <dbReference type="NCBI Taxonomy" id="190486"/>
    <lineage>
        <taxon>Bacteria</taxon>
        <taxon>Pseudomonadati</taxon>
        <taxon>Pseudomonadota</taxon>
        <taxon>Gammaproteobacteria</taxon>
        <taxon>Lysobacterales</taxon>
        <taxon>Lysobacteraceae</taxon>
        <taxon>Xanthomonas</taxon>
    </lineage>
</organism>
<accession>Q8PIM1</accession>
<name>GPMA_XANAC</name>
<reference key="1">
    <citation type="journal article" date="2002" name="Nature">
        <title>Comparison of the genomes of two Xanthomonas pathogens with differing host specificities.</title>
        <authorList>
            <person name="da Silva A.C.R."/>
            <person name="Ferro J.A."/>
            <person name="Reinach F.C."/>
            <person name="Farah C.S."/>
            <person name="Furlan L.R."/>
            <person name="Quaggio R.B."/>
            <person name="Monteiro-Vitorello C.B."/>
            <person name="Van Sluys M.A."/>
            <person name="Almeida N.F. Jr."/>
            <person name="Alves L.M.C."/>
            <person name="do Amaral A.M."/>
            <person name="Bertolini M.C."/>
            <person name="Camargo L.E.A."/>
            <person name="Camarotte G."/>
            <person name="Cannavan F."/>
            <person name="Cardozo J."/>
            <person name="Chambergo F."/>
            <person name="Ciapina L.P."/>
            <person name="Cicarelli R.M.B."/>
            <person name="Coutinho L.L."/>
            <person name="Cursino-Santos J.R."/>
            <person name="El-Dorry H."/>
            <person name="Faria J.B."/>
            <person name="Ferreira A.J.S."/>
            <person name="Ferreira R.C.C."/>
            <person name="Ferro M.I.T."/>
            <person name="Formighieri E.F."/>
            <person name="Franco M.C."/>
            <person name="Greggio C.C."/>
            <person name="Gruber A."/>
            <person name="Katsuyama A.M."/>
            <person name="Kishi L.T."/>
            <person name="Leite R.P."/>
            <person name="Lemos E.G.M."/>
            <person name="Lemos M.V.F."/>
            <person name="Locali E.C."/>
            <person name="Machado M.A."/>
            <person name="Madeira A.M.B.N."/>
            <person name="Martinez-Rossi N.M."/>
            <person name="Martins E.C."/>
            <person name="Meidanis J."/>
            <person name="Menck C.F.M."/>
            <person name="Miyaki C.Y."/>
            <person name="Moon D.H."/>
            <person name="Moreira L.M."/>
            <person name="Novo M.T.M."/>
            <person name="Okura V.K."/>
            <person name="Oliveira M.C."/>
            <person name="Oliveira V.R."/>
            <person name="Pereira H.A."/>
            <person name="Rossi A."/>
            <person name="Sena J.A.D."/>
            <person name="Silva C."/>
            <person name="de Souza R.F."/>
            <person name="Spinola L.A.F."/>
            <person name="Takita M.A."/>
            <person name="Tamura R.E."/>
            <person name="Teixeira E.C."/>
            <person name="Tezza R.I.D."/>
            <person name="Trindade dos Santos M."/>
            <person name="Truffi D."/>
            <person name="Tsai S.M."/>
            <person name="White F.F."/>
            <person name="Setubal J.C."/>
            <person name="Kitajima J.P."/>
        </authorList>
    </citation>
    <scope>NUCLEOTIDE SEQUENCE [LARGE SCALE GENOMIC DNA]</scope>
    <source>
        <strain>306</strain>
    </source>
</reference>
<comment type="function">
    <text evidence="1">Catalyzes the interconversion of 2-phosphoglycerate and 3-phosphoglycerate.</text>
</comment>
<comment type="catalytic activity">
    <reaction evidence="1">
        <text>(2R)-2-phosphoglycerate = (2R)-3-phosphoglycerate</text>
        <dbReference type="Rhea" id="RHEA:15901"/>
        <dbReference type="ChEBI" id="CHEBI:58272"/>
        <dbReference type="ChEBI" id="CHEBI:58289"/>
        <dbReference type="EC" id="5.4.2.11"/>
    </reaction>
</comment>
<comment type="pathway">
    <text evidence="1">Carbohydrate degradation; glycolysis; pyruvate from D-glyceraldehyde 3-phosphate: step 3/5.</text>
</comment>
<comment type="subunit">
    <text evidence="1">Homodimer.</text>
</comment>
<comment type="similarity">
    <text evidence="1">Belongs to the phosphoglycerate mutase family. BPG-dependent PGAM subfamily.</text>
</comment>
<keyword id="KW-0312">Gluconeogenesis</keyword>
<keyword id="KW-0324">Glycolysis</keyword>
<keyword id="KW-0413">Isomerase</keyword>
<evidence type="ECO:0000255" key="1">
    <source>
        <dbReference type="HAMAP-Rule" id="MF_01039"/>
    </source>
</evidence>
<gene>
    <name evidence="1" type="primary">gpmA</name>
    <name type="synonym">gpm</name>
    <name type="ordered locus">XAC2874</name>
</gene>
<proteinExistence type="inferred from homology"/>
<sequence length="249" mass="27986">MTRKLVLLRHGQSQWNLDNRFTGWVDVELTDQGRQEAVAAGRLMKDEGLQFDVAHTSVLKRAIHTLQGALKELDQDWLPVSKSWRLNERHYGGLQGLDKAETAAKHGEEQVKIWRRSYDIPPPAMDVNDPGHPCHDRRYATLDRNALPGTESLATTLVRVLPYWHDAIAPQLKAGQTVLVTAHGNSLRALYKYLNDVSNEQILELNIPTGIPLLFELDDSLQVRSFRYLGDPEAAKRAAEAVANQGKAK</sequence>
<protein>
    <recommendedName>
        <fullName evidence="1">2,3-bisphosphoglycerate-dependent phosphoglycerate mutase</fullName>
        <shortName evidence="1">BPG-dependent PGAM</shortName>
        <shortName evidence="1">PGAM</shortName>
        <shortName evidence="1">Phosphoglyceromutase</shortName>
        <shortName evidence="1">dPGM</shortName>
        <ecNumber evidence="1">5.4.2.11</ecNumber>
    </recommendedName>
</protein>
<dbReference type="EC" id="5.4.2.11" evidence="1"/>
<dbReference type="EMBL" id="AE008923">
    <property type="protein sequence ID" value="AAM37719.1"/>
    <property type="molecule type" value="Genomic_DNA"/>
</dbReference>
<dbReference type="RefSeq" id="WP_005913239.1">
    <property type="nucleotide sequence ID" value="NC_003919.1"/>
</dbReference>
<dbReference type="SMR" id="Q8PIM1"/>
<dbReference type="GeneID" id="66911960"/>
<dbReference type="KEGG" id="xac:XAC2874"/>
<dbReference type="eggNOG" id="COG0588">
    <property type="taxonomic scope" value="Bacteria"/>
</dbReference>
<dbReference type="HOGENOM" id="CLU_033323_1_1_6"/>
<dbReference type="UniPathway" id="UPA00109">
    <property type="reaction ID" value="UER00186"/>
</dbReference>
<dbReference type="Proteomes" id="UP000000576">
    <property type="component" value="Chromosome"/>
</dbReference>
<dbReference type="GO" id="GO:0004619">
    <property type="term" value="F:phosphoglycerate mutase activity"/>
    <property type="evidence" value="ECO:0007669"/>
    <property type="project" value="UniProtKB-EC"/>
</dbReference>
<dbReference type="GO" id="GO:0006094">
    <property type="term" value="P:gluconeogenesis"/>
    <property type="evidence" value="ECO:0007669"/>
    <property type="project" value="UniProtKB-UniRule"/>
</dbReference>
<dbReference type="GO" id="GO:0006096">
    <property type="term" value="P:glycolytic process"/>
    <property type="evidence" value="ECO:0007669"/>
    <property type="project" value="UniProtKB-UniRule"/>
</dbReference>
<dbReference type="CDD" id="cd07067">
    <property type="entry name" value="HP_PGM_like"/>
    <property type="match status" value="1"/>
</dbReference>
<dbReference type="FunFam" id="3.40.50.1240:FF:000003">
    <property type="entry name" value="2,3-bisphosphoglycerate-dependent phosphoglycerate mutase"/>
    <property type="match status" value="1"/>
</dbReference>
<dbReference type="Gene3D" id="3.40.50.1240">
    <property type="entry name" value="Phosphoglycerate mutase-like"/>
    <property type="match status" value="1"/>
</dbReference>
<dbReference type="HAMAP" id="MF_01039">
    <property type="entry name" value="PGAM_GpmA"/>
    <property type="match status" value="1"/>
</dbReference>
<dbReference type="InterPro" id="IPR013078">
    <property type="entry name" value="His_Pase_superF_clade-1"/>
</dbReference>
<dbReference type="InterPro" id="IPR029033">
    <property type="entry name" value="His_PPase_superfam"/>
</dbReference>
<dbReference type="InterPro" id="IPR001345">
    <property type="entry name" value="PG/BPGM_mutase_AS"/>
</dbReference>
<dbReference type="InterPro" id="IPR005952">
    <property type="entry name" value="Phosphogly_mut1"/>
</dbReference>
<dbReference type="NCBIfam" id="TIGR01258">
    <property type="entry name" value="pgm_1"/>
    <property type="match status" value="1"/>
</dbReference>
<dbReference type="NCBIfam" id="NF010713">
    <property type="entry name" value="PRK14115.1"/>
    <property type="match status" value="1"/>
</dbReference>
<dbReference type="PANTHER" id="PTHR11931">
    <property type="entry name" value="PHOSPHOGLYCERATE MUTASE"/>
    <property type="match status" value="1"/>
</dbReference>
<dbReference type="Pfam" id="PF00300">
    <property type="entry name" value="His_Phos_1"/>
    <property type="match status" value="2"/>
</dbReference>
<dbReference type="PIRSF" id="PIRSF000709">
    <property type="entry name" value="6PFK_2-Ptase"/>
    <property type="match status" value="1"/>
</dbReference>
<dbReference type="SMART" id="SM00855">
    <property type="entry name" value="PGAM"/>
    <property type="match status" value="1"/>
</dbReference>
<dbReference type="SUPFAM" id="SSF53254">
    <property type="entry name" value="Phosphoglycerate mutase-like"/>
    <property type="match status" value="1"/>
</dbReference>
<dbReference type="PROSITE" id="PS00175">
    <property type="entry name" value="PG_MUTASE"/>
    <property type="match status" value="1"/>
</dbReference>